<name>C556_AGRFC</name>
<comment type="function">
    <text evidence="1">Low-spin monoheme cytochrome c.</text>
</comment>
<comment type="subunit">
    <text evidence="1">Monomer.</text>
</comment>
<comment type="PTM">
    <text evidence="2">Binds 1 heme c group covalently per subunit.</text>
</comment>
<comment type="sequence caution" evidence="3">
    <conflict type="erroneous initiation">
        <sequence resource="EMBL-CDS" id="AAK86687"/>
    </conflict>
</comment>
<gene>
    <name type="ordered locus">Atu0881</name>
    <name type="ORF">AGR_C_1607</name>
</gene>
<protein>
    <recommendedName>
        <fullName>Cytochrome c-556</fullName>
    </recommendedName>
    <alternativeName>
        <fullName>Cytochrome c556</fullName>
    </alternativeName>
</protein>
<sequence length="146" mass="14985">MCMKLKTITAAMLFGCLCAGAVYAAGEVEKREGMMKQIGGSMGALAAISKGEKPFDAAAVKAAVTTISTNAKAFPDQFPVGSETGSAAAPAIWENFDDFKAKAAKLGTDADAVLANLPTDQAGVATAMKTLGADCGTCHQTYRLKK</sequence>
<feature type="signal peptide" evidence="1">
    <location>
        <begin position="1"/>
        <end position="24"/>
    </location>
</feature>
<feature type="chain" id="PRO_0000006547" description="Cytochrome c-556">
    <location>
        <begin position="25"/>
        <end position="146"/>
    </location>
</feature>
<feature type="binding site" description="axial binding residue" evidence="2">
    <location>
        <position position="35"/>
    </location>
    <ligand>
        <name>heme c</name>
        <dbReference type="ChEBI" id="CHEBI:61717"/>
    </ligand>
    <ligandPart>
        <name>Fe</name>
        <dbReference type="ChEBI" id="CHEBI:18248"/>
    </ligandPart>
</feature>
<feature type="binding site" description="covalent" evidence="2">
    <location>
        <position position="135"/>
    </location>
    <ligand>
        <name>heme c</name>
        <dbReference type="ChEBI" id="CHEBI:61717"/>
    </ligand>
</feature>
<feature type="binding site" description="covalent" evidence="2">
    <location>
        <position position="138"/>
    </location>
    <ligand>
        <name>heme c</name>
        <dbReference type="ChEBI" id="CHEBI:61717"/>
    </ligand>
</feature>
<feature type="binding site" description="axial binding residue" evidence="2">
    <location>
        <position position="139"/>
    </location>
    <ligand>
        <name>heme c</name>
        <dbReference type="ChEBI" id="CHEBI:61717"/>
    </ligand>
    <ligandPart>
        <name>Fe</name>
        <dbReference type="ChEBI" id="CHEBI:18248"/>
    </ligandPart>
</feature>
<keyword id="KW-0249">Electron transport</keyword>
<keyword id="KW-0349">Heme</keyword>
<keyword id="KW-0408">Iron</keyword>
<keyword id="KW-0479">Metal-binding</keyword>
<keyword id="KW-1185">Reference proteome</keyword>
<keyword id="KW-0732">Signal</keyword>
<keyword id="KW-0813">Transport</keyword>
<accession>Q8UH04</accession>
<evidence type="ECO:0000250" key="1"/>
<evidence type="ECO:0000250" key="2">
    <source>
        <dbReference type="UniProtKB" id="P00150"/>
    </source>
</evidence>
<evidence type="ECO:0000305" key="3"/>
<reference key="1">
    <citation type="journal article" date="2001" name="Science">
        <title>The genome of the natural genetic engineer Agrobacterium tumefaciens C58.</title>
        <authorList>
            <person name="Wood D.W."/>
            <person name="Setubal J.C."/>
            <person name="Kaul R."/>
            <person name="Monks D.E."/>
            <person name="Kitajima J.P."/>
            <person name="Okura V.K."/>
            <person name="Zhou Y."/>
            <person name="Chen L."/>
            <person name="Wood G.E."/>
            <person name="Almeida N.F. Jr."/>
            <person name="Woo L."/>
            <person name="Chen Y."/>
            <person name="Paulsen I.T."/>
            <person name="Eisen J.A."/>
            <person name="Karp P.D."/>
            <person name="Bovee D. Sr."/>
            <person name="Chapman P."/>
            <person name="Clendenning J."/>
            <person name="Deatherage G."/>
            <person name="Gillet W."/>
            <person name="Grant C."/>
            <person name="Kutyavin T."/>
            <person name="Levy R."/>
            <person name="Li M.-J."/>
            <person name="McClelland E."/>
            <person name="Palmieri A."/>
            <person name="Raymond C."/>
            <person name="Rouse G."/>
            <person name="Saenphimmachak C."/>
            <person name="Wu Z."/>
            <person name="Romero P."/>
            <person name="Gordon D."/>
            <person name="Zhang S."/>
            <person name="Yoo H."/>
            <person name="Tao Y."/>
            <person name="Biddle P."/>
            <person name="Jung M."/>
            <person name="Krespan W."/>
            <person name="Perry M."/>
            <person name="Gordon-Kamm B."/>
            <person name="Liao L."/>
            <person name="Kim S."/>
            <person name="Hendrick C."/>
            <person name="Zhao Z.-Y."/>
            <person name="Dolan M."/>
            <person name="Chumley F."/>
            <person name="Tingey S.V."/>
            <person name="Tomb J.-F."/>
            <person name="Gordon M.P."/>
            <person name="Olson M.V."/>
            <person name="Nester E.W."/>
        </authorList>
    </citation>
    <scope>NUCLEOTIDE SEQUENCE [LARGE SCALE GENOMIC DNA]</scope>
    <source>
        <strain>C58 / ATCC 33970</strain>
    </source>
</reference>
<reference key="2">
    <citation type="journal article" date="2001" name="Science">
        <title>Genome sequence of the plant pathogen and biotechnology agent Agrobacterium tumefaciens C58.</title>
        <authorList>
            <person name="Goodner B."/>
            <person name="Hinkle G."/>
            <person name="Gattung S."/>
            <person name="Miller N."/>
            <person name="Blanchard M."/>
            <person name="Qurollo B."/>
            <person name="Goldman B.S."/>
            <person name="Cao Y."/>
            <person name="Askenazi M."/>
            <person name="Halling C."/>
            <person name="Mullin L."/>
            <person name="Houmiel K."/>
            <person name="Gordon J."/>
            <person name="Vaudin M."/>
            <person name="Iartchouk O."/>
            <person name="Epp A."/>
            <person name="Liu F."/>
            <person name="Wollam C."/>
            <person name="Allinger M."/>
            <person name="Doughty D."/>
            <person name="Scott C."/>
            <person name="Lappas C."/>
            <person name="Markelz B."/>
            <person name="Flanagan C."/>
            <person name="Crowell C."/>
            <person name="Gurson J."/>
            <person name="Lomo C."/>
            <person name="Sear C."/>
            <person name="Strub G."/>
            <person name="Cielo C."/>
            <person name="Slater S."/>
        </authorList>
    </citation>
    <scope>NUCLEOTIDE SEQUENCE [LARGE SCALE GENOMIC DNA]</scope>
    <source>
        <strain>C58 / ATCC 33970</strain>
    </source>
</reference>
<proteinExistence type="inferred from homology"/>
<organism>
    <name type="scientific">Agrobacterium fabrum (strain C58 / ATCC 33970)</name>
    <name type="common">Agrobacterium tumefaciens (strain C58)</name>
    <dbReference type="NCBI Taxonomy" id="176299"/>
    <lineage>
        <taxon>Bacteria</taxon>
        <taxon>Pseudomonadati</taxon>
        <taxon>Pseudomonadota</taxon>
        <taxon>Alphaproteobacteria</taxon>
        <taxon>Hyphomicrobiales</taxon>
        <taxon>Rhizobiaceae</taxon>
        <taxon>Rhizobium/Agrobacterium group</taxon>
        <taxon>Agrobacterium</taxon>
        <taxon>Agrobacterium tumefaciens complex</taxon>
    </lineage>
</organism>
<dbReference type="EMBL" id="AE007869">
    <property type="protein sequence ID" value="AAK86687.2"/>
    <property type="status" value="ALT_INIT"/>
    <property type="molecule type" value="Genomic_DNA"/>
</dbReference>
<dbReference type="PIR" id="AI2684">
    <property type="entry name" value="AI2684"/>
</dbReference>
<dbReference type="PIR" id="F97466">
    <property type="entry name" value="F97466"/>
</dbReference>
<dbReference type="RefSeq" id="NP_353902.2">
    <property type="nucleotide sequence ID" value="NC_003062.2"/>
</dbReference>
<dbReference type="SMR" id="Q8UH04"/>
<dbReference type="STRING" id="176299.Atu0881"/>
<dbReference type="EnsemblBacteria" id="AAK86687">
    <property type="protein sequence ID" value="AAK86687"/>
    <property type="gene ID" value="Atu0881"/>
</dbReference>
<dbReference type="KEGG" id="atu:Atu0881"/>
<dbReference type="PATRIC" id="fig|176299.10.peg.879"/>
<dbReference type="eggNOG" id="COG3909">
    <property type="taxonomic scope" value="Bacteria"/>
</dbReference>
<dbReference type="HOGENOM" id="CLU_106713_2_0_5"/>
<dbReference type="OrthoDB" id="9811729at2"/>
<dbReference type="Proteomes" id="UP000000813">
    <property type="component" value="Chromosome circular"/>
</dbReference>
<dbReference type="GO" id="GO:0042597">
    <property type="term" value="C:periplasmic space"/>
    <property type="evidence" value="ECO:0007669"/>
    <property type="project" value="InterPro"/>
</dbReference>
<dbReference type="GO" id="GO:0009055">
    <property type="term" value="F:electron transfer activity"/>
    <property type="evidence" value="ECO:0007669"/>
    <property type="project" value="InterPro"/>
</dbReference>
<dbReference type="GO" id="GO:0020037">
    <property type="term" value="F:heme binding"/>
    <property type="evidence" value="ECO:0007669"/>
    <property type="project" value="InterPro"/>
</dbReference>
<dbReference type="GO" id="GO:0005506">
    <property type="term" value="F:iron ion binding"/>
    <property type="evidence" value="ECO:0007669"/>
    <property type="project" value="InterPro"/>
</dbReference>
<dbReference type="GO" id="GO:0022900">
    <property type="term" value="P:electron transport chain"/>
    <property type="evidence" value="ECO:0007669"/>
    <property type="project" value="InterPro"/>
</dbReference>
<dbReference type="Gene3D" id="1.20.120.10">
    <property type="entry name" value="Cytochrome c/b562"/>
    <property type="match status" value="1"/>
</dbReference>
<dbReference type="InterPro" id="IPR010980">
    <property type="entry name" value="Cyt_c/b562"/>
</dbReference>
<dbReference type="InterPro" id="IPR002321">
    <property type="entry name" value="Cyt_c_II"/>
</dbReference>
<dbReference type="InterPro" id="IPR012127">
    <property type="entry name" value="Cyt_c_prime"/>
</dbReference>
<dbReference type="InterPro" id="IPR015984">
    <property type="entry name" value="Cyt_c_prime_subgr"/>
</dbReference>
<dbReference type="Pfam" id="PF01322">
    <property type="entry name" value="Cytochrom_C_2"/>
    <property type="match status" value="1"/>
</dbReference>
<dbReference type="PIRSF" id="PIRSF000027">
    <property type="entry name" value="Cytc_c_prime"/>
    <property type="match status" value="1"/>
</dbReference>
<dbReference type="PRINTS" id="PR00608">
    <property type="entry name" value="CYTCHROMECII"/>
</dbReference>
<dbReference type="SUPFAM" id="SSF47175">
    <property type="entry name" value="Cytochromes"/>
    <property type="match status" value="1"/>
</dbReference>
<dbReference type="PROSITE" id="PS51009">
    <property type="entry name" value="CYTCII"/>
    <property type="match status" value="1"/>
</dbReference>